<reference key="1">
    <citation type="journal article" date="2004" name="Nature">
        <title>Genome evolution in yeasts.</title>
        <authorList>
            <person name="Dujon B."/>
            <person name="Sherman D."/>
            <person name="Fischer G."/>
            <person name="Durrens P."/>
            <person name="Casaregola S."/>
            <person name="Lafontaine I."/>
            <person name="de Montigny J."/>
            <person name="Marck C."/>
            <person name="Neuveglise C."/>
            <person name="Talla E."/>
            <person name="Goffard N."/>
            <person name="Frangeul L."/>
            <person name="Aigle M."/>
            <person name="Anthouard V."/>
            <person name="Babour A."/>
            <person name="Barbe V."/>
            <person name="Barnay S."/>
            <person name="Blanchin S."/>
            <person name="Beckerich J.-M."/>
            <person name="Beyne E."/>
            <person name="Bleykasten C."/>
            <person name="Boisrame A."/>
            <person name="Boyer J."/>
            <person name="Cattolico L."/>
            <person name="Confanioleri F."/>
            <person name="de Daruvar A."/>
            <person name="Despons L."/>
            <person name="Fabre E."/>
            <person name="Fairhead C."/>
            <person name="Ferry-Dumazet H."/>
            <person name="Groppi A."/>
            <person name="Hantraye F."/>
            <person name="Hennequin C."/>
            <person name="Jauniaux N."/>
            <person name="Joyet P."/>
            <person name="Kachouri R."/>
            <person name="Kerrest A."/>
            <person name="Koszul R."/>
            <person name="Lemaire M."/>
            <person name="Lesur I."/>
            <person name="Ma L."/>
            <person name="Muller H."/>
            <person name="Nicaud J.-M."/>
            <person name="Nikolski M."/>
            <person name="Oztas S."/>
            <person name="Ozier-Kalogeropoulos O."/>
            <person name="Pellenz S."/>
            <person name="Potier S."/>
            <person name="Richard G.-F."/>
            <person name="Straub M.-L."/>
            <person name="Suleau A."/>
            <person name="Swennen D."/>
            <person name="Tekaia F."/>
            <person name="Wesolowski-Louvel M."/>
            <person name="Westhof E."/>
            <person name="Wirth B."/>
            <person name="Zeniou-Meyer M."/>
            <person name="Zivanovic Y."/>
            <person name="Bolotin-Fukuhara M."/>
            <person name="Thierry A."/>
            <person name="Bouchier C."/>
            <person name="Caudron B."/>
            <person name="Scarpelli C."/>
            <person name="Gaillardin C."/>
            <person name="Weissenbach J."/>
            <person name="Wincker P."/>
            <person name="Souciet J.-L."/>
        </authorList>
    </citation>
    <scope>NUCLEOTIDE SEQUENCE [LARGE SCALE GENOMIC DNA]</scope>
    <source>
        <strain>ATCC 36239 / CBS 767 / BCRC 21394 / JCM 1990 / NBRC 0083 / IGC 2968</strain>
    </source>
</reference>
<proteinExistence type="inferred from homology"/>
<keyword id="KW-0067">ATP-binding</keyword>
<keyword id="KW-0175">Coiled coil</keyword>
<keyword id="KW-0347">Helicase</keyword>
<keyword id="KW-0378">Hydrolase</keyword>
<keyword id="KW-0547">Nucleotide-binding</keyword>
<keyword id="KW-0539">Nucleus</keyword>
<keyword id="KW-1185">Reference proteome</keyword>
<keyword id="KW-0690">Ribosome biogenesis</keyword>
<keyword id="KW-0694">RNA-binding</keyword>
<gene>
    <name type="primary">DRS1</name>
    <name type="ordered locus">DEHA2C17534g</name>
</gene>
<feature type="chain" id="PRO_0000232245" description="ATP-dependent RNA helicase DRS1">
    <location>
        <begin position="1"/>
        <end position="771"/>
    </location>
</feature>
<feature type="domain" description="Helicase ATP-binding" evidence="3">
    <location>
        <begin position="289"/>
        <end position="465"/>
    </location>
</feature>
<feature type="domain" description="Helicase C-terminal" evidence="4">
    <location>
        <begin position="476"/>
        <end position="643"/>
    </location>
</feature>
<feature type="region of interest" description="Disordered" evidence="5">
    <location>
        <begin position="1"/>
        <end position="96"/>
    </location>
</feature>
<feature type="region of interest" description="Disordered" evidence="5">
    <location>
        <begin position="109"/>
        <end position="128"/>
    </location>
</feature>
<feature type="region of interest" description="Disordered" evidence="5">
    <location>
        <begin position="134"/>
        <end position="233"/>
    </location>
</feature>
<feature type="region of interest" description="Disordered" evidence="5">
    <location>
        <begin position="695"/>
        <end position="771"/>
    </location>
</feature>
<feature type="coiled-coil region" evidence="2">
    <location>
        <begin position="33"/>
        <end position="84"/>
    </location>
</feature>
<feature type="short sequence motif" description="Q motif">
    <location>
        <begin position="258"/>
        <end position="286"/>
    </location>
</feature>
<feature type="short sequence motif" description="DEAD box">
    <location>
        <begin position="412"/>
        <end position="415"/>
    </location>
</feature>
<feature type="compositionally biased region" description="Acidic residues" evidence="5">
    <location>
        <begin position="28"/>
        <end position="46"/>
    </location>
</feature>
<feature type="compositionally biased region" description="Basic and acidic residues" evidence="5">
    <location>
        <begin position="47"/>
        <end position="56"/>
    </location>
</feature>
<feature type="compositionally biased region" description="Basic residues" evidence="5">
    <location>
        <begin position="57"/>
        <end position="68"/>
    </location>
</feature>
<feature type="compositionally biased region" description="Basic and acidic residues" evidence="5">
    <location>
        <begin position="69"/>
        <end position="79"/>
    </location>
</feature>
<feature type="compositionally biased region" description="Polar residues" evidence="5">
    <location>
        <begin position="85"/>
        <end position="96"/>
    </location>
</feature>
<feature type="compositionally biased region" description="Acidic residues" evidence="5">
    <location>
        <begin position="149"/>
        <end position="182"/>
    </location>
</feature>
<feature type="compositionally biased region" description="Acidic residues" evidence="5">
    <location>
        <begin position="197"/>
        <end position="233"/>
    </location>
</feature>
<feature type="compositionally biased region" description="Basic and acidic residues" evidence="5">
    <location>
        <begin position="695"/>
        <end position="717"/>
    </location>
</feature>
<feature type="compositionally biased region" description="Basic residues" evidence="5">
    <location>
        <begin position="725"/>
        <end position="736"/>
    </location>
</feature>
<feature type="compositionally biased region" description="Basic residues" evidence="5">
    <location>
        <begin position="759"/>
        <end position="771"/>
    </location>
</feature>
<feature type="binding site" evidence="3">
    <location>
        <begin position="302"/>
        <end position="309"/>
    </location>
    <ligand>
        <name>ATP</name>
        <dbReference type="ChEBI" id="CHEBI:30616"/>
    </ligand>
</feature>
<protein>
    <recommendedName>
        <fullName>ATP-dependent RNA helicase DRS1</fullName>
        <ecNumber>3.6.4.13</ecNumber>
    </recommendedName>
</protein>
<sequence length="771" mass="86855">MAKKSNKSNKLSTLQKPSQKDFILTIDSDSEGENEIPDLEEESEVDQELKEEEKPKPKPKPKSKKNKKNKDINNDQEKTEEQEEINPNFTFSLDGFETSTAFDGWDFKVESNGDVTKKPISKDVDLDGILRRKGGLANLAGSDVKVDEKNDEVESEEVEEVEEDDEDEENEQEGDDDDDELALDGFGMSATEASANADDDQDEQEPEDDDEGVEADMDEEYPGSDQEDEKPVEDTAEDMAEFYADEEEATTAKKQLHTTFQSLQLSRPVLKGLSQLGYTKPSPIQSACIPIALLGKDIVAGAVTGSGKTAAYMIPIIERLLYKPAKISSTRVIVLAPTRELAIQVCDVGKKIGQFVNNLNFGLAVGGLNLRQQEQQLKTRPDIVIATPGRLIDHIRNSPSFSIDSLEVLVIDEADRMLDEGFQAELTEILSLIPRHKRQTLLYSATMNTKIQDLIQLSLQKPVRVMIDPPKSAAIKLVQEFVRIRKRDHLKPALLFQLIKSVDPSQQNRIVVFVARKESAHKLRIILGLLGMRVSELHGSLTQEQRLASVNDFKNLTVPVLICTDLAARGLDIPKIEIVINYDMPKTHEIYLHRVGRTARAGREGKSITFVGESTQDRAIVKDAIKSISEEQARNSKQGKAVSRNVDWKEVEELNKIVESKATVIEEVLDEEKQAKEMLHAEMELSKATNMIKHEKEIQSRPRRTWFESEKDKKHQTEVMQQLTKHGKKVNSHKRKAIEVKKENSSRSYKKTKQDRMSVQKKPKSNGKNKK</sequence>
<evidence type="ECO:0000250" key="1"/>
<evidence type="ECO:0000255" key="2"/>
<evidence type="ECO:0000255" key="3">
    <source>
        <dbReference type="PROSITE-ProRule" id="PRU00541"/>
    </source>
</evidence>
<evidence type="ECO:0000255" key="4">
    <source>
        <dbReference type="PROSITE-ProRule" id="PRU00542"/>
    </source>
</evidence>
<evidence type="ECO:0000256" key="5">
    <source>
        <dbReference type="SAM" id="MobiDB-lite"/>
    </source>
</evidence>
<evidence type="ECO:0000305" key="6"/>
<name>DRS1_DEBHA</name>
<dbReference type="EC" id="3.6.4.13"/>
<dbReference type="EMBL" id="CR382135">
    <property type="protein sequence ID" value="CAG86536.1"/>
    <property type="molecule type" value="Genomic_DNA"/>
</dbReference>
<dbReference type="RefSeq" id="XP_458454.1">
    <property type="nucleotide sequence ID" value="XM_458454.1"/>
</dbReference>
<dbReference type="SMR" id="Q6BTL5"/>
<dbReference type="FunCoup" id="Q6BTL5">
    <property type="interactions" value="968"/>
</dbReference>
<dbReference type="STRING" id="284592.Q6BTL5"/>
<dbReference type="GeneID" id="2900616"/>
<dbReference type="KEGG" id="dha:DEHA2C17534g"/>
<dbReference type="VEuPathDB" id="FungiDB:DEHA2C17534g"/>
<dbReference type="eggNOG" id="KOG0338">
    <property type="taxonomic scope" value="Eukaryota"/>
</dbReference>
<dbReference type="HOGENOM" id="CLU_003041_3_2_1"/>
<dbReference type="InParanoid" id="Q6BTL5"/>
<dbReference type="OMA" id="MIDPPKQ"/>
<dbReference type="OrthoDB" id="10259843at2759"/>
<dbReference type="Proteomes" id="UP000000599">
    <property type="component" value="Chromosome C"/>
</dbReference>
<dbReference type="GO" id="GO:0005829">
    <property type="term" value="C:cytosol"/>
    <property type="evidence" value="ECO:0007669"/>
    <property type="project" value="TreeGrafter"/>
</dbReference>
<dbReference type="GO" id="GO:0005730">
    <property type="term" value="C:nucleolus"/>
    <property type="evidence" value="ECO:0007669"/>
    <property type="project" value="UniProtKB-SubCell"/>
</dbReference>
<dbReference type="GO" id="GO:0005524">
    <property type="term" value="F:ATP binding"/>
    <property type="evidence" value="ECO:0007669"/>
    <property type="project" value="UniProtKB-KW"/>
</dbReference>
<dbReference type="GO" id="GO:0016887">
    <property type="term" value="F:ATP hydrolysis activity"/>
    <property type="evidence" value="ECO:0007669"/>
    <property type="project" value="RHEA"/>
</dbReference>
<dbReference type="GO" id="GO:0003723">
    <property type="term" value="F:RNA binding"/>
    <property type="evidence" value="ECO:0007669"/>
    <property type="project" value="UniProtKB-KW"/>
</dbReference>
<dbReference type="GO" id="GO:0003724">
    <property type="term" value="F:RNA helicase activity"/>
    <property type="evidence" value="ECO:0007669"/>
    <property type="project" value="UniProtKB-EC"/>
</dbReference>
<dbReference type="GO" id="GO:0006364">
    <property type="term" value="P:rRNA processing"/>
    <property type="evidence" value="ECO:0007669"/>
    <property type="project" value="UniProtKB-ARBA"/>
</dbReference>
<dbReference type="CDD" id="cd17947">
    <property type="entry name" value="DEADc_DDX27"/>
    <property type="match status" value="1"/>
</dbReference>
<dbReference type="CDD" id="cd18787">
    <property type="entry name" value="SF2_C_DEAD"/>
    <property type="match status" value="1"/>
</dbReference>
<dbReference type="FunFam" id="3.40.50.300:FF:000842">
    <property type="entry name" value="ATP-dependent RNA helicase DRS1"/>
    <property type="match status" value="1"/>
</dbReference>
<dbReference type="Gene3D" id="3.40.50.300">
    <property type="entry name" value="P-loop containing nucleotide triphosphate hydrolases"/>
    <property type="match status" value="2"/>
</dbReference>
<dbReference type="InterPro" id="IPR011545">
    <property type="entry name" value="DEAD/DEAH_box_helicase_dom"/>
</dbReference>
<dbReference type="InterPro" id="IPR050079">
    <property type="entry name" value="DEAD_box_RNA_helicase"/>
</dbReference>
<dbReference type="InterPro" id="IPR014001">
    <property type="entry name" value="Helicase_ATP-bd"/>
</dbReference>
<dbReference type="InterPro" id="IPR001650">
    <property type="entry name" value="Helicase_C-like"/>
</dbReference>
<dbReference type="InterPro" id="IPR027417">
    <property type="entry name" value="P-loop_NTPase"/>
</dbReference>
<dbReference type="InterPro" id="IPR000629">
    <property type="entry name" value="RNA-helicase_DEAD-box_CS"/>
</dbReference>
<dbReference type="InterPro" id="IPR014014">
    <property type="entry name" value="RNA_helicase_DEAD_Q_motif"/>
</dbReference>
<dbReference type="PANTHER" id="PTHR47959:SF1">
    <property type="entry name" value="ATP-DEPENDENT RNA HELICASE DBPA"/>
    <property type="match status" value="1"/>
</dbReference>
<dbReference type="PANTHER" id="PTHR47959">
    <property type="entry name" value="ATP-DEPENDENT RNA HELICASE RHLE-RELATED"/>
    <property type="match status" value="1"/>
</dbReference>
<dbReference type="Pfam" id="PF00270">
    <property type="entry name" value="DEAD"/>
    <property type="match status" value="1"/>
</dbReference>
<dbReference type="Pfam" id="PF00271">
    <property type="entry name" value="Helicase_C"/>
    <property type="match status" value="1"/>
</dbReference>
<dbReference type="SMART" id="SM00487">
    <property type="entry name" value="DEXDc"/>
    <property type="match status" value="1"/>
</dbReference>
<dbReference type="SMART" id="SM00490">
    <property type="entry name" value="HELICc"/>
    <property type="match status" value="1"/>
</dbReference>
<dbReference type="SUPFAM" id="SSF52540">
    <property type="entry name" value="P-loop containing nucleoside triphosphate hydrolases"/>
    <property type="match status" value="1"/>
</dbReference>
<dbReference type="PROSITE" id="PS00039">
    <property type="entry name" value="DEAD_ATP_HELICASE"/>
    <property type="match status" value="1"/>
</dbReference>
<dbReference type="PROSITE" id="PS51192">
    <property type="entry name" value="HELICASE_ATP_BIND_1"/>
    <property type="match status" value="1"/>
</dbReference>
<dbReference type="PROSITE" id="PS51194">
    <property type="entry name" value="HELICASE_CTER"/>
    <property type="match status" value="1"/>
</dbReference>
<dbReference type="PROSITE" id="PS51195">
    <property type="entry name" value="Q_MOTIF"/>
    <property type="match status" value="1"/>
</dbReference>
<accession>Q6BTL5</accession>
<comment type="function">
    <text evidence="1">ATP-binding RNA helicase involved in ribosome assembly.</text>
</comment>
<comment type="catalytic activity">
    <reaction>
        <text>ATP + H2O = ADP + phosphate + H(+)</text>
        <dbReference type="Rhea" id="RHEA:13065"/>
        <dbReference type="ChEBI" id="CHEBI:15377"/>
        <dbReference type="ChEBI" id="CHEBI:15378"/>
        <dbReference type="ChEBI" id="CHEBI:30616"/>
        <dbReference type="ChEBI" id="CHEBI:43474"/>
        <dbReference type="ChEBI" id="CHEBI:456216"/>
        <dbReference type="EC" id="3.6.4.13"/>
    </reaction>
</comment>
<comment type="subunit">
    <text evidence="1">Associates with pre-ribosomal particles.</text>
</comment>
<comment type="subcellular location">
    <subcellularLocation>
        <location evidence="1">Nucleus</location>
        <location evidence="1">Nucleolus</location>
    </subcellularLocation>
</comment>
<comment type="domain">
    <text>The Q motif is unique to and characteristic of the DEAD box family of RNA helicases and controls ATP binding and hydrolysis.</text>
</comment>
<comment type="similarity">
    <text evidence="6">Belongs to the DEAD box helicase family. DDX27/DRS1 subfamily.</text>
</comment>
<organism>
    <name type="scientific">Debaryomyces hansenii (strain ATCC 36239 / CBS 767 / BCRC 21394 / JCM 1990 / NBRC 0083 / IGC 2968)</name>
    <name type="common">Yeast</name>
    <name type="synonym">Torulaspora hansenii</name>
    <dbReference type="NCBI Taxonomy" id="284592"/>
    <lineage>
        <taxon>Eukaryota</taxon>
        <taxon>Fungi</taxon>
        <taxon>Dikarya</taxon>
        <taxon>Ascomycota</taxon>
        <taxon>Saccharomycotina</taxon>
        <taxon>Pichiomycetes</taxon>
        <taxon>Debaryomycetaceae</taxon>
        <taxon>Debaryomyces</taxon>
    </lineage>
</organism>